<comment type="function">
    <text evidence="1 4 6">Catalytic component of the m-AAA protease, a protease that plays a key role in proteostasis of inner mitochondrial membrane proteins, and which is essential for axonal and neuron development (PubMed:11549317, PubMed:19656850). Afg3l1 possesses both ATPase and protease activities: the ATPase activity is required to unfold substrates, threading them into the internal proteolytic cavity for hydrolysis into small peptide fragments (By similarity). The m-AAA protease exerts a dual role in the mitochondrial inner membrane: it mediates the processing of specific regulatory proteins and ensures protein quality control by degrading misfolded polypeptides (By similarity). Required for SPG7 maturation into its active mature form after SPG7 cleavage by mitochondrial-processing peptidase (MPP) (PubMed:19656850).</text>
</comment>
<comment type="catalytic activity">
    <reaction evidence="1">
        <text>ATP + H2O = ADP + phosphate + H(+)</text>
        <dbReference type="Rhea" id="RHEA:13065"/>
        <dbReference type="ChEBI" id="CHEBI:15377"/>
        <dbReference type="ChEBI" id="CHEBI:15378"/>
        <dbReference type="ChEBI" id="CHEBI:30616"/>
        <dbReference type="ChEBI" id="CHEBI:43474"/>
        <dbReference type="ChEBI" id="CHEBI:456216"/>
    </reaction>
    <physiologicalReaction direction="left-to-right" evidence="1">
        <dbReference type="Rhea" id="RHEA:13066"/>
    </physiologicalReaction>
</comment>
<comment type="cofactor">
    <cofactor evidence="1">
        <name>Zn(2+)</name>
        <dbReference type="ChEBI" id="CHEBI:29105"/>
    </cofactor>
    <text evidence="1">Binds 1 zinc ion per subunit.</text>
</comment>
<comment type="subunit">
    <text evidence="5 6">Homooligomer (PubMed:17101804). Forms heterohexamers with Spg7 and Afg3l1 (PubMed:17101804, PubMed:19656850). The m-AAA protease is either composed of homohexamers of Afg3l2 or heterohexamers of Afg3l1, Afg3l2 and/or Spg7 (PubMed:17101804, PubMed:19656850).</text>
</comment>
<comment type="subcellular location">
    <subcellularLocation>
        <location evidence="4 6">Mitochondrion inner membrane</location>
        <topology evidence="2">Multi-pass membrane protein</topology>
    </subcellularLocation>
</comment>
<comment type="alternative products">
    <event type="alternative splicing"/>
    <isoform>
        <id>Q920A7-1</id>
        <name>1</name>
        <sequence type="displayed"/>
    </isoform>
    <isoform>
        <id>Q920A7-2</id>
        <name>2</name>
        <sequence type="described" ref="VSP_031809 VSP_031810"/>
    </isoform>
</comment>
<comment type="disruption phenotype">
    <text evidence="7">No visible phenotype (PubMed:27911893). Conditional deletion of both Afg3l1 and Afg3l2 in mature oligodendrocytes triggers progressive motor dysfunction and demyelination, leading to rapid oligodendrocyte cell death (PubMed:27911893). Conditional deletion of both Afg3l1 and Afg3l2 in mature oligodendrocytes also causes premature hair greying, due by progressive loss of melanoblasts that share a common developmental origin with Schwann cells (PubMed:27911893).</text>
</comment>
<comment type="similarity">
    <text evidence="10">In the N-terminal section; belongs to the AAA ATPase family.</text>
</comment>
<comment type="similarity">
    <text evidence="10">In the C-terminal section; belongs to the peptidase M41 family.</text>
</comment>
<comment type="caution">
    <text evidence="10">The orthologous human gene is a pseudogene.</text>
</comment>
<comment type="sequence caution" evidence="10">
    <conflict type="erroneous initiation">
        <sequence resource="EMBL-CDS" id="AAK66971"/>
    </conflict>
</comment>
<comment type="sequence caution" evidence="10">
    <conflict type="frameshift">
        <sequence resource="EMBL-CDS" id="BAB28211"/>
    </conflict>
</comment>
<keyword id="KW-0025">Alternative splicing</keyword>
<keyword id="KW-0067">ATP-binding</keyword>
<keyword id="KW-0903">Direct protein sequencing</keyword>
<keyword id="KW-0378">Hydrolase</keyword>
<keyword id="KW-0472">Membrane</keyword>
<keyword id="KW-0479">Metal-binding</keyword>
<keyword id="KW-0482">Metalloprotease</keyword>
<keyword id="KW-0496">Mitochondrion</keyword>
<keyword id="KW-0999">Mitochondrion inner membrane</keyword>
<keyword id="KW-0547">Nucleotide-binding</keyword>
<keyword id="KW-0645">Protease</keyword>
<keyword id="KW-1185">Reference proteome</keyword>
<keyword id="KW-0809">Transit peptide</keyword>
<keyword id="KW-0812">Transmembrane</keyword>
<keyword id="KW-1133">Transmembrane helix</keyword>
<keyword id="KW-0862">Zinc</keyword>
<organism>
    <name type="scientific">Mus musculus</name>
    <name type="common">Mouse</name>
    <dbReference type="NCBI Taxonomy" id="10090"/>
    <lineage>
        <taxon>Eukaryota</taxon>
        <taxon>Metazoa</taxon>
        <taxon>Chordata</taxon>
        <taxon>Craniata</taxon>
        <taxon>Vertebrata</taxon>
        <taxon>Euteleostomi</taxon>
        <taxon>Mammalia</taxon>
        <taxon>Eutheria</taxon>
        <taxon>Euarchontoglires</taxon>
        <taxon>Glires</taxon>
        <taxon>Rodentia</taxon>
        <taxon>Myomorpha</taxon>
        <taxon>Muroidea</taxon>
        <taxon>Muridae</taxon>
        <taxon>Murinae</taxon>
        <taxon>Mus</taxon>
        <taxon>Mus</taxon>
    </lineage>
</organism>
<gene>
    <name evidence="9 11" type="primary">Afg3l1</name>
</gene>
<name>AFG31_MOUSE</name>
<sequence length="789" mass="87047">MLLRLVGAAGSRALAWPFSKLWRCGGCAGSGGTVWSSVRACGIALQGHLGRCSQQLALQGKLTSFSPRLYSKPPRGFEKFFKNKKNRKSASPGNSVPPKKEPKNAGPGGDGGNRGGKGDDFPWWKRMQKGEFPWDDKDFRSLAVLGAGVAAGFLYFYFRDPGKEITWKHFVQYYLARGLVDRLEVVNKQFVRVIPVPGTTSERFVWFNIGSVDTFERNLESAQWELGIEPTNQAAVVYTTESDGSFLRSLVPTLVLVSILLYAMRRGPMGTGRGGRGGGLFSVGETTAKILKNNIDVRFADVAGCEEAKLEIMEFVNFLKNPKQYQDLGAKIPKGAMLTGPPGTGKTLLAKATAGEANVPFITVNGSEFLEMFVGVGPARVRDMFAMARKHAPCILFIDEIDAIGRKRGRGHLGGQSEQENTLNQMLVEMDGFNSSTNVVVLAGTNRPDILDPALTRPGRFDRQIYIGPPDIKGRSSIFKVHLRPLKLDGSLSKDALSRKLAALTPGFTGADISNVCNEAALIAARHLSPSVQERHFEQAIERVIGGLEKKTQVLQPSEKTTVAYHEAGHAVVGWFLEHADPLLKVSIIPRGKGLGYAQYLPREQFLYTREQLFDRMCMMLGGRVAEQLFFGQITTGAQDDLRKVTQSAYAQIVQFGMSEKLGQVSFDFPRQGETMVEKPYSEATAQLIDEEVRCLVRSAYNRTLELLTQCREQVEKVGRRLLEKEVLEKADMIELLGPRPFAEKSTYEEFVEGTGSLEEDTSLPEGLKDWNKGREEGGTERGLQESPV</sequence>
<reference key="1">
    <citation type="journal article" date="2005" name="Science">
        <title>The transcriptional landscape of the mammalian genome.</title>
        <authorList>
            <person name="Carninci P."/>
            <person name="Kasukawa T."/>
            <person name="Katayama S."/>
            <person name="Gough J."/>
            <person name="Frith M.C."/>
            <person name="Maeda N."/>
            <person name="Oyama R."/>
            <person name="Ravasi T."/>
            <person name="Lenhard B."/>
            <person name="Wells C."/>
            <person name="Kodzius R."/>
            <person name="Shimokawa K."/>
            <person name="Bajic V.B."/>
            <person name="Brenner S.E."/>
            <person name="Batalov S."/>
            <person name="Forrest A.R."/>
            <person name="Zavolan M."/>
            <person name="Davis M.J."/>
            <person name="Wilming L.G."/>
            <person name="Aidinis V."/>
            <person name="Allen J.E."/>
            <person name="Ambesi-Impiombato A."/>
            <person name="Apweiler R."/>
            <person name="Aturaliya R.N."/>
            <person name="Bailey T.L."/>
            <person name="Bansal M."/>
            <person name="Baxter L."/>
            <person name="Beisel K.W."/>
            <person name="Bersano T."/>
            <person name="Bono H."/>
            <person name="Chalk A.M."/>
            <person name="Chiu K.P."/>
            <person name="Choudhary V."/>
            <person name="Christoffels A."/>
            <person name="Clutterbuck D.R."/>
            <person name="Crowe M.L."/>
            <person name="Dalla E."/>
            <person name="Dalrymple B.P."/>
            <person name="de Bono B."/>
            <person name="Della Gatta G."/>
            <person name="di Bernardo D."/>
            <person name="Down T."/>
            <person name="Engstrom P."/>
            <person name="Fagiolini M."/>
            <person name="Faulkner G."/>
            <person name="Fletcher C.F."/>
            <person name="Fukushima T."/>
            <person name="Furuno M."/>
            <person name="Futaki S."/>
            <person name="Gariboldi M."/>
            <person name="Georgii-Hemming P."/>
            <person name="Gingeras T.R."/>
            <person name="Gojobori T."/>
            <person name="Green R.E."/>
            <person name="Gustincich S."/>
            <person name="Harbers M."/>
            <person name="Hayashi Y."/>
            <person name="Hensch T.K."/>
            <person name="Hirokawa N."/>
            <person name="Hill D."/>
            <person name="Huminiecki L."/>
            <person name="Iacono M."/>
            <person name="Ikeo K."/>
            <person name="Iwama A."/>
            <person name="Ishikawa T."/>
            <person name="Jakt M."/>
            <person name="Kanapin A."/>
            <person name="Katoh M."/>
            <person name="Kawasawa Y."/>
            <person name="Kelso J."/>
            <person name="Kitamura H."/>
            <person name="Kitano H."/>
            <person name="Kollias G."/>
            <person name="Krishnan S.P."/>
            <person name="Kruger A."/>
            <person name="Kummerfeld S.K."/>
            <person name="Kurochkin I.V."/>
            <person name="Lareau L.F."/>
            <person name="Lazarevic D."/>
            <person name="Lipovich L."/>
            <person name="Liu J."/>
            <person name="Liuni S."/>
            <person name="McWilliam S."/>
            <person name="Madan Babu M."/>
            <person name="Madera M."/>
            <person name="Marchionni L."/>
            <person name="Matsuda H."/>
            <person name="Matsuzawa S."/>
            <person name="Miki H."/>
            <person name="Mignone F."/>
            <person name="Miyake S."/>
            <person name="Morris K."/>
            <person name="Mottagui-Tabar S."/>
            <person name="Mulder N."/>
            <person name="Nakano N."/>
            <person name="Nakauchi H."/>
            <person name="Ng P."/>
            <person name="Nilsson R."/>
            <person name="Nishiguchi S."/>
            <person name="Nishikawa S."/>
            <person name="Nori F."/>
            <person name="Ohara O."/>
            <person name="Okazaki Y."/>
            <person name="Orlando V."/>
            <person name="Pang K.C."/>
            <person name="Pavan W.J."/>
            <person name="Pavesi G."/>
            <person name="Pesole G."/>
            <person name="Petrovsky N."/>
            <person name="Piazza S."/>
            <person name="Reed J."/>
            <person name="Reid J.F."/>
            <person name="Ring B.Z."/>
            <person name="Ringwald M."/>
            <person name="Rost B."/>
            <person name="Ruan Y."/>
            <person name="Salzberg S.L."/>
            <person name="Sandelin A."/>
            <person name="Schneider C."/>
            <person name="Schoenbach C."/>
            <person name="Sekiguchi K."/>
            <person name="Semple C.A."/>
            <person name="Seno S."/>
            <person name="Sessa L."/>
            <person name="Sheng Y."/>
            <person name="Shibata Y."/>
            <person name="Shimada H."/>
            <person name="Shimada K."/>
            <person name="Silva D."/>
            <person name="Sinclair B."/>
            <person name="Sperling S."/>
            <person name="Stupka E."/>
            <person name="Sugiura K."/>
            <person name="Sultana R."/>
            <person name="Takenaka Y."/>
            <person name="Taki K."/>
            <person name="Tammoja K."/>
            <person name="Tan S.L."/>
            <person name="Tang S."/>
            <person name="Taylor M.S."/>
            <person name="Tegner J."/>
            <person name="Teichmann S.A."/>
            <person name="Ueda H.R."/>
            <person name="van Nimwegen E."/>
            <person name="Verardo R."/>
            <person name="Wei C.L."/>
            <person name="Yagi K."/>
            <person name="Yamanishi H."/>
            <person name="Zabarovsky E."/>
            <person name="Zhu S."/>
            <person name="Zimmer A."/>
            <person name="Hide W."/>
            <person name="Bult C."/>
            <person name="Grimmond S.M."/>
            <person name="Teasdale R.D."/>
            <person name="Liu E.T."/>
            <person name="Brusic V."/>
            <person name="Quackenbush J."/>
            <person name="Wahlestedt C."/>
            <person name="Mattick J.S."/>
            <person name="Hume D.A."/>
            <person name="Kai C."/>
            <person name="Sasaki D."/>
            <person name="Tomaru Y."/>
            <person name="Fukuda S."/>
            <person name="Kanamori-Katayama M."/>
            <person name="Suzuki M."/>
            <person name="Aoki J."/>
            <person name="Arakawa T."/>
            <person name="Iida J."/>
            <person name="Imamura K."/>
            <person name="Itoh M."/>
            <person name="Kato T."/>
            <person name="Kawaji H."/>
            <person name="Kawagashira N."/>
            <person name="Kawashima T."/>
            <person name="Kojima M."/>
            <person name="Kondo S."/>
            <person name="Konno H."/>
            <person name="Nakano K."/>
            <person name="Ninomiya N."/>
            <person name="Nishio T."/>
            <person name="Okada M."/>
            <person name="Plessy C."/>
            <person name="Shibata K."/>
            <person name="Shiraki T."/>
            <person name="Suzuki S."/>
            <person name="Tagami M."/>
            <person name="Waki K."/>
            <person name="Watahiki A."/>
            <person name="Okamura-Oho Y."/>
            <person name="Suzuki H."/>
            <person name="Kawai J."/>
            <person name="Hayashizaki Y."/>
        </authorList>
    </citation>
    <scope>NUCLEOTIDE SEQUENCE [LARGE SCALE MRNA] (ISOFORMS 1 AND 2)</scope>
    <source>
        <strain>BALB/cJ</strain>
        <strain>C57BL/6J</strain>
        <strain>DBA/2J</strain>
        <tissue>Embryo</tissue>
        <tissue>Erythroleukemia</tissue>
        <tissue>Thymic lymphoma</tissue>
    </source>
</reference>
<reference key="2">
    <citation type="journal article" date="2004" name="Genome Res.">
        <title>The status, quality, and expansion of the NIH full-length cDNA project: the Mammalian Gene Collection (MGC).</title>
        <authorList>
            <consortium name="The MGC Project Team"/>
        </authorList>
    </citation>
    <scope>NUCLEOTIDE SEQUENCE [LARGE SCALE MRNA] (ISOFORM 1)</scope>
    <source>
        <strain>C57BL/6J</strain>
        <tissue>Brain</tissue>
    </source>
</reference>
<reference key="3">
    <citation type="journal article" date="2001" name="Genomics">
        <title>Molecular and functional analyses of the human and mouse genes encoding AFG3L1, a mitochondrial metalloprotease homologous to the human spastic paraplegia protein.</title>
        <authorList>
            <person name="Kremmidiotis G."/>
            <person name="Gardner A.E."/>
            <person name="Settasatian C."/>
            <person name="Savoia A."/>
            <person name="Sutherland G.R."/>
            <person name="Callen D.F."/>
        </authorList>
    </citation>
    <scope>NUCLEOTIDE SEQUENCE [MRNA] OF 5-789 (ISOFORM 1)</scope>
    <scope>FUNCTION</scope>
    <scope>SUBCELLULAR LOCATION</scope>
</reference>
<reference key="4">
    <citation type="journal article" date="2009" name="Mol. Biol. Cell">
        <title>Autocatalytic processing of m-AAA protease subunits in mitochondria.</title>
        <authorList>
            <person name="Koppen M."/>
            <person name="Bonn F."/>
            <person name="Ehses S."/>
            <person name="Langer T."/>
        </authorList>
    </citation>
    <scope>PROTEIN SEQUENCE OF 71-80</scope>
    <scope>FUNCTION</scope>
    <scope>PROTEOLYTIC PROCESSING</scope>
    <scope>SUBUNIT</scope>
    <scope>INTERACTION WITH SPG7 AND AFG3L2</scope>
    <scope>SUBCELLULAR LOCATION</scope>
    <scope>MUTAGENESIS OF GLU-567</scope>
</reference>
<reference key="5">
    <citation type="journal article" date="2007" name="Mol. Cell. Biol.">
        <title>Variable and tissue-specific subunit composition of mitochondrial m-AAA protease complexes linked to hereditary spastic paraplegia.</title>
        <authorList>
            <person name="Koppen M."/>
            <person name="Metodiev M.D."/>
            <person name="Casari G."/>
            <person name="Rugarli E.I."/>
            <person name="Langer T."/>
        </authorList>
    </citation>
    <scope>SUBUNIT</scope>
</reference>
<reference key="6">
    <citation type="journal article" date="2010" name="Cell">
        <title>A tissue-specific atlas of mouse protein phosphorylation and expression.</title>
        <authorList>
            <person name="Huttlin E.L."/>
            <person name="Jedrychowski M.P."/>
            <person name="Elias J.E."/>
            <person name="Goswami T."/>
            <person name="Rad R."/>
            <person name="Beausoleil S.A."/>
            <person name="Villen J."/>
            <person name="Haas W."/>
            <person name="Sowa M.E."/>
            <person name="Gygi S.P."/>
        </authorList>
    </citation>
    <scope>IDENTIFICATION BY MASS SPECTROMETRY [LARGE SCALE ANALYSIS]</scope>
    <source>
        <tissue>Brown adipose tissue</tissue>
        <tissue>Heart</tissue>
        <tissue>Kidney</tissue>
        <tissue>Liver</tissue>
        <tissue>Spleen</tissue>
        <tissue>Testis</tissue>
    </source>
</reference>
<reference key="7">
    <citation type="journal article" date="2016" name="PLoS Genet.">
        <title>The mitochondrial m-AAA protease prevents demyelination and hair greying.</title>
        <authorList>
            <person name="Wang S."/>
            <person name="Jacquemyn J."/>
            <person name="Murru S."/>
            <person name="Martinelli P."/>
            <person name="Barth E."/>
            <person name="Langer T."/>
            <person name="Niessen C.M."/>
            <person name="Rugarli E.I."/>
        </authorList>
    </citation>
    <scope>DISRUPTION PHENOTYPE</scope>
</reference>
<protein>
    <recommendedName>
        <fullName evidence="10">Mitochondrial inner membrane m-AAA protease component AFG3L1</fullName>
        <ecNumber evidence="4">3.4.24.-</ecNumber>
        <ecNumber evidence="1">3.6.-.-</ecNumber>
    </recommendedName>
    <alternativeName>
        <fullName>AFG3-like protein 1</fullName>
    </alternativeName>
</protein>
<dbReference type="EC" id="3.4.24.-" evidence="4"/>
<dbReference type="EC" id="3.6.-.-" evidence="1"/>
<dbReference type="EMBL" id="AK012394">
    <property type="protein sequence ID" value="BAB28211.3"/>
    <property type="status" value="ALT_FRAME"/>
    <property type="molecule type" value="mRNA"/>
</dbReference>
<dbReference type="EMBL" id="AK159647">
    <property type="protein sequence ID" value="BAE35259.1"/>
    <property type="molecule type" value="mRNA"/>
</dbReference>
<dbReference type="EMBL" id="AK167964">
    <property type="protein sequence ID" value="BAE39961.1"/>
    <property type="molecule type" value="mRNA"/>
</dbReference>
<dbReference type="EMBL" id="AK168244">
    <property type="protein sequence ID" value="BAE40194.1"/>
    <property type="molecule type" value="mRNA"/>
</dbReference>
<dbReference type="EMBL" id="BC056978">
    <property type="protein sequence ID" value="AAH56978.1"/>
    <property type="molecule type" value="mRNA"/>
</dbReference>
<dbReference type="EMBL" id="AF329695">
    <property type="protein sequence ID" value="AAK66971.1"/>
    <property type="status" value="ALT_INIT"/>
    <property type="molecule type" value="mRNA"/>
</dbReference>
<dbReference type="CCDS" id="CCDS22760.1">
    <molecule id="Q920A7-1"/>
</dbReference>
<dbReference type="RefSeq" id="NP_473411.2">
    <molecule id="Q920A7-1"/>
    <property type="nucleotide sequence ID" value="NM_054070.3"/>
</dbReference>
<dbReference type="RefSeq" id="XP_011246578.1">
    <property type="nucleotide sequence ID" value="XM_011248276.2"/>
</dbReference>
<dbReference type="SMR" id="Q920A7"/>
<dbReference type="BioGRID" id="227903">
    <property type="interactions" value="2"/>
</dbReference>
<dbReference type="FunCoup" id="Q920A7">
    <property type="interactions" value="1356"/>
</dbReference>
<dbReference type="IntAct" id="Q920A7">
    <property type="interactions" value="1"/>
</dbReference>
<dbReference type="STRING" id="10090.ENSMUSP00000001520"/>
<dbReference type="MEROPS" id="M41.016"/>
<dbReference type="iPTMnet" id="Q920A7"/>
<dbReference type="PhosphoSitePlus" id="Q920A7"/>
<dbReference type="jPOST" id="Q920A7"/>
<dbReference type="PaxDb" id="10090-ENSMUSP00000001520"/>
<dbReference type="PeptideAtlas" id="Q920A7"/>
<dbReference type="ProteomicsDB" id="296123">
    <molecule id="Q920A7-1"/>
</dbReference>
<dbReference type="ProteomicsDB" id="296124">
    <molecule id="Q920A7-2"/>
</dbReference>
<dbReference type="Pumba" id="Q920A7"/>
<dbReference type="DNASU" id="114896"/>
<dbReference type="Ensembl" id="ENSMUST00000001520.13">
    <molecule id="Q920A7-1"/>
    <property type="protein sequence ID" value="ENSMUSP00000001520.8"/>
    <property type="gene ID" value="ENSMUSG00000031967.16"/>
</dbReference>
<dbReference type="Ensembl" id="ENSMUST00000098320.6">
    <molecule id="Q920A7-2"/>
    <property type="protein sequence ID" value="ENSMUSP00000095924.5"/>
    <property type="gene ID" value="ENSMUSG00000031967.16"/>
</dbReference>
<dbReference type="GeneID" id="114896"/>
<dbReference type="KEGG" id="mmu:114896"/>
<dbReference type="UCSC" id="uc009nwd.2">
    <molecule id="Q920A7-1"/>
    <property type="organism name" value="mouse"/>
</dbReference>
<dbReference type="AGR" id="MGI:1928277"/>
<dbReference type="CTD" id="114896"/>
<dbReference type="MGI" id="MGI:1928277">
    <property type="gene designation" value="Afg3l1"/>
</dbReference>
<dbReference type="VEuPathDB" id="HostDB:ENSMUSG00000031967"/>
<dbReference type="eggNOG" id="KOG0731">
    <property type="taxonomic scope" value="Eukaryota"/>
</dbReference>
<dbReference type="GeneTree" id="ENSGT00940000160625"/>
<dbReference type="HOGENOM" id="CLU_000688_23_1_1"/>
<dbReference type="InParanoid" id="Q920A7"/>
<dbReference type="OMA" id="YDKQGGG"/>
<dbReference type="OrthoDB" id="1413014at2759"/>
<dbReference type="PhylomeDB" id="Q920A7"/>
<dbReference type="TreeFam" id="TF105004"/>
<dbReference type="BRENDA" id="3.4.24.B18">
    <property type="organism ID" value="3474"/>
</dbReference>
<dbReference type="BioGRID-ORCS" id="114896">
    <property type="hits" value="8 hits in 77 CRISPR screens"/>
</dbReference>
<dbReference type="PRO" id="PR:Q920A7"/>
<dbReference type="Proteomes" id="UP000000589">
    <property type="component" value="Chromosome 8"/>
</dbReference>
<dbReference type="RNAct" id="Q920A7">
    <property type="molecule type" value="protein"/>
</dbReference>
<dbReference type="Bgee" id="ENSMUSG00000031967">
    <property type="expression patterns" value="Expressed in yolk sac and 231 other cell types or tissues"/>
</dbReference>
<dbReference type="GO" id="GO:0005745">
    <property type="term" value="C:m-AAA complex"/>
    <property type="evidence" value="ECO:0000314"/>
    <property type="project" value="MGI"/>
</dbReference>
<dbReference type="GO" id="GO:0005743">
    <property type="term" value="C:mitochondrial inner membrane"/>
    <property type="evidence" value="ECO:0000314"/>
    <property type="project" value="UniProtKB"/>
</dbReference>
<dbReference type="GO" id="GO:0005739">
    <property type="term" value="C:mitochondrion"/>
    <property type="evidence" value="ECO:0000314"/>
    <property type="project" value="MGI"/>
</dbReference>
<dbReference type="GO" id="GO:0005524">
    <property type="term" value="F:ATP binding"/>
    <property type="evidence" value="ECO:0007669"/>
    <property type="project" value="UniProtKB-KW"/>
</dbReference>
<dbReference type="GO" id="GO:0016887">
    <property type="term" value="F:ATP hydrolysis activity"/>
    <property type="evidence" value="ECO:0000250"/>
    <property type="project" value="UniProtKB"/>
</dbReference>
<dbReference type="GO" id="GO:0004176">
    <property type="term" value="F:ATP-dependent peptidase activity"/>
    <property type="evidence" value="ECO:0007669"/>
    <property type="project" value="InterPro"/>
</dbReference>
<dbReference type="GO" id="GO:0140567">
    <property type="term" value="F:membrane protein dislocase activity"/>
    <property type="evidence" value="ECO:0000250"/>
    <property type="project" value="UniProtKB"/>
</dbReference>
<dbReference type="GO" id="GO:0004222">
    <property type="term" value="F:metalloendopeptidase activity"/>
    <property type="evidence" value="ECO:0000250"/>
    <property type="project" value="UniProtKB"/>
</dbReference>
<dbReference type="GO" id="GO:0008270">
    <property type="term" value="F:zinc ion binding"/>
    <property type="evidence" value="ECO:0007669"/>
    <property type="project" value="InterPro"/>
</dbReference>
<dbReference type="GO" id="GO:0072753">
    <property type="term" value="P:cellular response to glutathione"/>
    <property type="evidence" value="ECO:0000250"/>
    <property type="project" value="UniProtKB"/>
</dbReference>
<dbReference type="GO" id="GO:0042407">
    <property type="term" value="P:cristae formation"/>
    <property type="evidence" value="ECO:0000316"/>
    <property type="project" value="MGI"/>
</dbReference>
<dbReference type="GO" id="GO:0008053">
    <property type="term" value="P:mitochondrial fusion"/>
    <property type="evidence" value="ECO:0000316"/>
    <property type="project" value="MGI"/>
</dbReference>
<dbReference type="GO" id="GO:0034982">
    <property type="term" value="P:mitochondrial protein processing"/>
    <property type="evidence" value="ECO:0000314"/>
    <property type="project" value="MGI"/>
</dbReference>
<dbReference type="GO" id="GO:0007005">
    <property type="term" value="P:mitochondrion organization"/>
    <property type="evidence" value="ECO:0000316"/>
    <property type="project" value="MGI"/>
</dbReference>
<dbReference type="GO" id="GO:0030163">
    <property type="term" value="P:protein catabolic process"/>
    <property type="evidence" value="ECO:0000250"/>
    <property type="project" value="UniProtKB"/>
</dbReference>
<dbReference type="GO" id="GO:0016485">
    <property type="term" value="P:protein processing"/>
    <property type="evidence" value="ECO:0000314"/>
    <property type="project" value="UniProtKB"/>
</dbReference>
<dbReference type="CDD" id="cd19501">
    <property type="entry name" value="RecA-like_FtsH"/>
    <property type="match status" value="1"/>
</dbReference>
<dbReference type="FunFam" id="1.10.8.60:FF:000019">
    <property type="entry name" value="AFG3-like AAA ATPase 2"/>
    <property type="match status" value="1"/>
</dbReference>
<dbReference type="FunFam" id="1.20.58.760:FF:000003">
    <property type="entry name" value="AFG3-like AAA ATPase 2"/>
    <property type="match status" value="1"/>
</dbReference>
<dbReference type="FunFam" id="3.40.1690.20:FF:000001">
    <property type="entry name" value="AFG3-like AAA ATPase 2"/>
    <property type="match status" value="1"/>
</dbReference>
<dbReference type="FunFam" id="3.40.50.300:FF:000001">
    <property type="entry name" value="ATP-dependent zinc metalloprotease FtsH"/>
    <property type="match status" value="1"/>
</dbReference>
<dbReference type="Gene3D" id="1.10.8.60">
    <property type="match status" value="1"/>
</dbReference>
<dbReference type="Gene3D" id="3.40.1690.20">
    <property type="match status" value="1"/>
</dbReference>
<dbReference type="Gene3D" id="3.40.50.300">
    <property type="entry name" value="P-loop containing nucleotide triphosphate hydrolases"/>
    <property type="match status" value="1"/>
</dbReference>
<dbReference type="Gene3D" id="1.20.58.760">
    <property type="entry name" value="Peptidase M41"/>
    <property type="match status" value="1"/>
</dbReference>
<dbReference type="HAMAP" id="MF_01458">
    <property type="entry name" value="FtsH"/>
    <property type="match status" value="1"/>
</dbReference>
<dbReference type="InterPro" id="IPR003593">
    <property type="entry name" value="AAA+_ATPase"/>
</dbReference>
<dbReference type="InterPro" id="IPR041569">
    <property type="entry name" value="AAA_lid_3"/>
</dbReference>
<dbReference type="InterPro" id="IPR050928">
    <property type="entry name" value="ATP-dep_Zn_Metalloprotease"/>
</dbReference>
<dbReference type="InterPro" id="IPR003959">
    <property type="entry name" value="ATPase_AAA_core"/>
</dbReference>
<dbReference type="InterPro" id="IPR003960">
    <property type="entry name" value="ATPase_AAA_CS"/>
</dbReference>
<dbReference type="InterPro" id="IPR005936">
    <property type="entry name" value="FtsH"/>
</dbReference>
<dbReference type="InterPro" id="IPR027417">
    <property type="entry name" value="P-loop_NTPase"/>
</dbReference>
<dbReference type="InterPro" id="IPR011546">
    <property type="entry name" value="Pept_M41_FtsH_extracell"/>
</dbReference>
<dbReference type="InterPro" id="IPR000642">
    <property type="entry name" value="Peptidase_M41"/>
</dbReference>
<dbReference type="InterPro" id="IPR037219">
    <property type="entry name" value="Peptidase_M41-like"/>
</dbReference>
<dbReference type="NCBIfam" id="TIGR01241">
    <property type="entry name" value="FtsH_fam"/>
    <property type="match status" value="1"/>
</dbReference>
<dbReference type="PANTHER" id="PTHR43655:SF7">
    <property type="entry name" value="AFG3-LIKE PROTEIN 1"/>
    <property type="match status" value="1"/>
</dbReference>
<dbReference type="PANTHER" id="PTHR43655">
    <property type="entry name" value="ATP-DEPENDENT PROTEASE"/>
    <property type="match status" value="1"/>
</dbReference>
<dbReference type="Pfam" id="PF00004">
    <property type="entry name" value="AAA"/>
    <property type="match status" value="1"/>
</dbReference>
<dbReference type="Pfam" id="PF17862">
    <property type="entry name" value="AAA_lid_3"/>
    <property type="match status" value="1"/>
</dbReference>
<dbReference type="Pfam" id="PF06480">
    <property type="entry name" value="FtsH_ext"/>
    <property type="match status" value="1"/>
</dbReference>
<dbReference type="Pfam" id="PF01434">
    <property type="entry name" value="Peptidase_M41"/>
    <property type="match status" value="1"/>
</dbReference>
<dbReference type="SMART" id="SM00382">
    <property type="entry name" value="AAA"/>
    <property type="match status" value="1"/>
</dbReference>
<dbReference type="SUPFAM" id="SSF140990">
    <property type="entry name" value="FtsH protease domain-like"/>
    <property type="match status" value="1"/>
</dbReference>
<dbReference type="SUPFAM" id="SSF52540">
    <property type="entry name" value="P-loop containing nucleoside triphosphate hydrolases"/>
    <property type="match status" value="1"/>
</dbReference>
<dbReference type="PROSITE" id="PS00674">
    <property type="entry name" value="AAA"/>
    <property type="match status" value="1"/>
</dbReference>
<evidence type="ECO:0000250" key="1">
    <source>
        <dbReference type="UniProtKB" id="Q9Y4W6"/>
    </source>
</evidence>
<evidence type="ECO:0000255" key="2"/>
<evidence type="ECO:0000256" key="3">
    <source>
        <dbReference type="SAM" id="MobiDB-lite"/>
    </source>
</evidence>
<evidence type="ECO:0000269" key="4">
    <source>
    </source>
</evidence>
<evidence type="ECO:0000269" key="5">
    <source>
    </source>
</evidence>
<evidence type="ECO:0000269" key="6">
    <source>
    </source>
</evidence>
<evidence type="ECO:0000269" key="7">
    <source>
    </source>
</evidence>
<evidence type="ECO:0000303" key="8">
    <source>
    </source>
</evidence>
<evidence type="ECO:0000303" key="9">
    <source>
    </source>
</evidence>
<evidence type="ECO:0000305" key="10"/>
<evidence type="ECO:0000312" key="11">
    <source>
        <dbReference type="MGI" id="MGI:1928277"/>
    </source>
</evidence>
<proteinExistence type="evidence at protein level"/>
<feature type="transit peptide" description="Mitochondrion" evidence="6">
    <location>
        <begin position="1"/>
        <end position="70"/>
    </location>
</feature>
<feature type="chain" id="PRO_0000084672" description="Mitochondrial inner membrane m-AAA protease component AFG3L1">
    <location>
        <begin position="71"/>
        <end position="789"/>
    </location>
</feature>
<feature type="transmembrane region" description="Helical" evidence="2">
    <location>
        <begin position="139"/>
        <end position="158"/>
    </location>
</feature>
<feature type="transmembrane region" description="Helical" evidence="2">
    <location>
        <begin position="246"/>
        <end position="264"/>
    </location>
</feature>
<feature type="region of interest" description="Disordered" evidence="3">
    <location>
        <begin position="81"/>
        <end position="121"/>
    </location>
</feature>
<feature type="region of interest" description="Disordered" evidence="3">
    <location>
        <begin position="749"/>
        <end position="789"/>
    </location>
</feature>
<feature type="compositionally biased region" description="Gly residues" evidence="3">
    <location>
        <begin position="106"/>
        <end position="115"/>
    </location>
</feature>
<feature type="compositionally biased region" description="Basic and acidic residues" evidence="3">
    <location>
        <begin position="767"/>
        <end position="789"/>
    </location>
</feature>
<feature type="active site" evidence="1">
    <location>
        <position position="567"/>
    </location>
</feature>
<feature type="binding site" evidence="1">
    <location>
        <position position="302"/>
    </location>
    <ligand>
        <name>ATP</name>
        <dbReference type="ChEBI" id="CHEBI:30616"/>
    </ligand>
</feature>
<feature type="binding site" evidence="1">
    <location>
        <position position="303"/>
    </location>
    <ligand>
        <name>ATP</name>
        <dbReference type="ChEBI" id="CHEBI:30616"/>
    </ligand>
</feature>
<feature type="binding site" evidence="1">
    <location>
        <position position="344"/>
    </location>
    <ligand>
        <name>ATP</name>
        <dbReference type="ChEBI" id="CHEBI:30616"/>
    </ligand>
</feature>
<feature type="binding site" evidence="1">
    <location>
        <position position="345"/>
    </location>
    <ligand>
        <name>ATP</name>
        <dbReference type="ChEBI" id="CHEBI:30616"/>
    </ligand>
</feature>
<feature type="binding site" evidence="1">
    <location>
        <position position="346"/>
    </location>
    <ligand>
        <name>ATP</name>
        <dbReference type="ChEBI" id="CHEBI:30616"/>
    </ligand>
</feature>
<feature type="binding site" evidence="1">
    <location>
        <position position="347"/>
    </location>
    <ligand>
        <name>ATP</name>
        <dbReference type="ChEBI" id="CHEBI:30616"/>
    </ligand>
</feature>
<feature type="binding site" evidence="1">
    <location>
        <position position="348"/>
    </location>
    <ligand>
        <name>ATP</name>
        <dbReference type="ChEBI" id="CHEBI:30616"/>
    </ligand>
</feature>
<feature type="binding site" evidence="1">
    <location>
        <position position="482"/>
    </location>
    <ligand>
        <name>ATP</name>
        <dbReference type="ChEBI" id="CHEBI:30616"/>
    </ligand>
</feature>
<feature type="binding site" evidence="1">
    <location>
        <position position="566"/>
    </location>
    <ligand>
        <name>Zn(2+)</name>
        <dbReference type="ChEBI" id="CHEBI:29105"/>
        <note>catalytic</note>
    </ligand>
</feature>
<feature type="binding site" evidence="1">
    <location>
        <position position="570"/>
    </location>
    <ligand>
        <name>Zn(2+)</name>
        <dbReference type="ChEBI" id="CHEBI:29105"/>
        <note>catalytic</note>
    </ligand>
</feature>
<feature type="binding site" evidence="1">
    <location>
        <position position="641"/>
    </location>
    <ligand>
        <name>Zn(2+)</name>
        <dbReference type="ChEBI" id="CHEBI:29105"/>
        <note>catalytic</note>
    </ligand>
</feature>
<feature type="splice variant" id="VSP_031809" description="In isoform 2." evidence="8">
    <original>LEKKTQVLQPSEKTTVAYHEAGHAVVGWFLEHADPLL</original>
    <variation>VHHTSRQGAWLRPVPSPRAVPLHTRAALRPHVYDAGG</variation>
    <location>
        <begin position="548"/>
        <end position="584"/>
    </location>
</feature>
<feature type="splice variant" id="VSP_031810" description="In isoform 2." evidence="8">
    <location>
        <begin position="585"/>
        <end position="789"/>
    </location>
</feature>
<feature type="mutagenesis site" description="Absence of proteolytic activity. Loss of its processing into the mature form." evidence="6">
    <original>E</original>
    <variation>Q</variation>
    <location>
        <position position="567"/>
    </location>
</feature>
<accession>Q920A7</accession>
<accession>Q3THK2</accession>
<accession>Q6PGJ7</accession>
<accession>Q9CZN2</accession>